<comment type="function">
    <text evidence="4 5 6">Important for maintaining cell shape and cell wall integrity by localizing peptidoglycan synthesis to the cell poles. Protects PbpB (PBP3, FtsI) from oxidative stress-induced cleavage.</text>
</comment>
<comment type="subunit">
    <text evidence="5 6 8">Forms homooligomers. Interacts with PbpB and CwsA.</text>
</comment>
<comment type="subcellular location">
    <subcellularLocation>
        <location evidence="4 9">Cytoplasm</location>
    </subcellularLocation>
    <text>Localizes to the cell poles.</text>
</comment>
<comment type="induction">
    <text evidence="7">Positively regulated by the stringent response.</text>
</comment>
<comment type="PTM">
    <text evidence="3 6">Phosphorylated by PknA. Phosphorylation enhances polar localization, which in turn heightens polar peptidoglycan biosynthesis.</text>
</comment>
<comment type="disruption phenotype">
    <text evidence="5">Proteolysis of PbpB (PBP3, FtsI) upon oxidative stress in depletion experiments; degradation is prevented by overexpression of Wag31 but not the 46-Asn--Asp-48 deletion.</text>
</comment>
<comment type="miscellaneous">
    <text evidence="11">Was identified as a high-confidence drug target.</text>
</comment>
<comment type="similarity">
    <text evidence="10">Belongs to the DivIVA family.</text>
</comment>
<reference key="1">
    <citation type="journal article" date="1995" name="Infect. Immun.">
        <title>Molecular and immunological characterization of the highly conserved antigen 84 from Mycobacterium tuberculosis and Mycobacterium leprae.</title>
        <authorList>
            <person name="Hermans P.W.M."/>
            <person name="Abebe F."/>
            <person name="Kuteyi V.I.O."/>
            <person name="Kolk A.H.J."/>
            <person name="Thole J.E.R."/>
            <person name="Harboe M."/>
        </authorList>
    </citation>
    <scope>NUCLEOTIDE SEQUENCE [GENOMIC DNA]</scope>
    <scope>SUBCELLULAR LOCATION</scope>
</reference>
<reference key="2">
    <citation type="journal article" date="1998" name="Nature">
        <title>Deciphering the biology of Mycobacterium tuberculosis from the complete genome sequence.</title>
        <authorList>
            <person name="Cole S.T."/>
            <person name="Brosch R."/>
            <person name="Parkhill J."/>
            <person name="Garnier T."/>
            <person name="Churcher C.M."/>
            <person name="Harris D.E."/>
            <person name="Gordon S.V."/>
            <person name="Eiglmeier K."/>
            <person name="Gas S."/>
            <person name="Barry C.E. III"/>
            <person name="Tekaia F."/>
            <person name="Badcock K."/>
            <person name="Basham D."/>
            <person name="Brown D."/>
            <person name="Chillingworth T."/>
            <person name="Connor R."/>
            <person name="Davies R.M."/>
            <person name="Devlin K."/>
            <person name="Feltwell T."/>
            <person name="Gentles S."/>
            <person name="Hamlin N."/>
            <person name="Holroyd S."/>
            <person name="Hornsby T."/>
            <person name="Jagels K."/>
            <person name="Krogh A."/>
            <person name="McLean J."/>
            <person name="Moule S."/>
            <person name="Murphy L.D."/>
            <person name="Oliver S."/>
            <person name="Osborne J."/>
            <person name="Quail M.A."/>
            <person name="Rajandream M.A."/>
            <person name="Rogers J."/>
            <person name="Rutter S."/>
            <person name="Seeger K."/>
            <person name="Skelton S."/>
            <person name="Squares S."/>
            <person name="Squares R."/>
            <person name="Sulston J.E."/>
            <person name="Taylor K."/>
            <person name="Whitehead S."/>
            <person name="Barrell B.G."/>
        </authorList>
    </citation>
    <scope>NUCLEOTIDE SEQUENCE [LARGE SCALE GENOMIC DNA]</scope>
    <source>
        <strain>ATCC 25618 / H37Rv</strain>
    </source>
</reference>
<reference key="3">
    <citation type="journal article" date="2005" name="Genes Dev.">
        <title>The Mycobacterium tuberculosis serine/threonine kinases PknA and PknB: substrate identification and regulation of cell shape.</title>
        <authorList>
            <person name="Kang C.M."/>
            <person name="Abbott D.W."/>
            <person name="Park S.T."/>
            <person name="Dascher C.C."/>
            <person name="Cantley L.C."/>
            <person name="Husson R.N."/>
        </authorList>
    </citation>
    <scope>PHOSPHORYLATION AT THR-73</scope>
    <scope>MUTAGENESIS OF THR-73</scope>
    <source>
        <strain>ATCC 25618 / H37Rv</strain>
    </source>
</reference>
<reference key="4">
    <citation type="journal article" date="2008" name="BMC Syst. Biol.">
        <title>targetTB: a target identification pipeline for Mycobacterium tuberculosis through an interactome, reactome and genome-scale structural analysis.</title>
        <authorList>
            <person name="Raman K."/>
            <person name="Yeturu K."/>
            <person name="Chandra N."/>
        </authorList>
    </citation>
    <scope>IDENTIFICATION AS A DRUG TARGET [LARGE SCALE ANALYSIS]</scope>
</reference>
<reference key="5">
    <citation type="journal article" date="2008" name="Microbiology">
        <title>Wag31, a homologue of the cell division protein DivIVA, regulates growth, morphology and polar cell wall synthesis in mycobacteria.</title>
        <authorList>
            <person name="Kang C.M."/>
            <person name="Nyayapathy S."/>
            <person name="Lee J.Y."/>
            <person name="Suh J.W."/>
            <person name="Husson R.N."/>
        </authorList>
    </citation>
    <scope>FUNCTION</scope>
    <scope>SUBCELLULAR LOCATION</scope>
</reference>
<reference key="6">
    <citation type="journal article" date="2009" name="Mol. Microbiol.">
        <title>Novel role of Wag31 in protection of mycobacteria under oxidative stress.</title>
        <authorList>
            <person name="Mukherjee P."/>
            <person name="Sureka K."/>
            <person name="Datta P."/>
            <person name="Hossain T."/>
            <person name="Barik S."/>
            <person name="Das K.P."/>
            <person name="Kundu M."/>
            <person name="Basu J."/>
        </authorList>
    </citation>
    <scope>FUNCTION</scope>
    <scope>INTERACTION WITH PBPB</scope>
    <scope>SUBUNIT</scope>
    <scope>DISRUPTION PHENOTYPE</scope>
    <scope>MUTAGENESIS OF 46-ASN--ASP-48</scope>
    <source>
        <strain>ATCC 25618 / H37Rv</strain>
    </source>
</reference>
<reference key="7">
    <citation type="journal article" date="2010" name="BMC Microbiol.">
        <title>Regulation of polar peptidoglycan biosynthesis by Wag31 phosphorylation in mycobacteria.</title>
        <authorList>
            <person name="Jani C."/>
            <person name="Eoh H."/>
            <person name="Lee J.J."/>
            <person name="Hamasha K."/>
            <person name="Sahana M.B."/>
            <person name="Han J.S."/>
            <person name="Nyayapathy S."/>
            <person name="Lee J.Y."/>
            <person name="Suh J.W."/>
            <person name="Lee S.H."/>
            <person name="Rehse S.J."/>
            <person name="Crick D.C."/>
            <person name="Kang C.M."/>
        </authorList>
    </citation>
    <scope>FUNCTION</scope>
    <scope>SUBUNIT</scope>
    <scope>PHOSPHORYLATION</scope>
    <scope>MUTAGENESIS OF THR-73</scope>
</reference>
<reference key="8">
    <citation type="journal article" date="2011" name="FEMS Microbiol. Lett.">
        <title>The wag31 gene of Mycobacterium tuberculosis is positively regulated by the stringent response.</title>
        <authorList>
            <person name="Dahl J.L."/>
            <person name="Lau Bonilla D."/>
        </authorList>
    </citation>
    <scope>INDUCTION</scope>
    <source>
        <strain>ATCC 25618 / H37Rv</strain>
    </source>
</reference>
<reference key="9">
    <citation type="journal article" date="2011" name="Mol. Cell. Proteomics">
        <title>Proteogenomic analysis of Mycobacterium tuberculosis by high resolution mass spectrometry.</title>
        <authorList>
            <person name="Kelkar D.S."/>
            <person name="Kumar D."/>
            <person name="Kumar P."/>
            <person name="Balakrishnan L."/>
            <person name="Muthusamy B."/>
            <person name="Yadav A.K."/>
            <person name="Shrivastava P."/>
            <person name="Marimuthu A."/>
            <person name="Anand S."/>
            <person name="Sundaram H."/>
            <person name="Kingsbury R."/>
            <person name="Harsha H.C."/>
            <person name="Nair B."/>
            <person name="Prasad T.S."/>
            <person name="Chauhan D.S."/>
            <person name="Katoch K."/>
            <person name="Katoch V.M."/>
            <person name="Kumar P."/>
            <person name="Chaerkady R."/>
            <person name="Ramachandran S."/>
            <person name="Dash D."/>
            <person name="Pandey A."/>
        </authorList>
    </citation>
    <scope>IDENTIFICATION BY MASS SPECTROMETRY [LARGE SCALE ANALYSIS]</scope>
    <source>
        <strain>ATCC 25618 / H37Rv</strain>
    </source>
</reference>
<reference key="10">
    <citation type="journal article" date="2012" name="J. Bacteriol.">
        <title>Mycobacterium tuberculosis CwsA interacts with CrgA and Wag31, and the CrgA-CwsA complex is involved in peptidoglycan synthesis and cell shape determination.</title>
        <authorList>
            <person name="Plocinski P."/>
            <person name="Arora N."/>
            <person name="Sarva K."/>
            <person name="Blaszczyk E."/>
            <person name="Qin H."/>
            <person name="Das N."/>
            <person name="Plocinska R."/>
            <person name="Ziolkiewicz M."/>
            <person name="Dziadek J."/>
            <person name="Kiran M."/>
            <person name="Gorla P."/>
            <person name="Cross T.A."/>
            <person name="Madiraju M."/>
            <person name="Rajagopalan M."/>
        </authorList>
    </citation>
    <scope>INTERACTION WITH CWSA</scope>
    <source>
        <strain>ATCC 25618 / H37Rv</strain>
    </source>
</reference>
<keyword id="KW-0002">3D-structure</keyword>
<keyword id="KW-0131">Cell cycle</keyword>
<keyword id="KW-0132">Cell division</keyword>
<keyword id="KW-0133">Cell shape</keyword>
<keyword id="KW-0175">Coiled coil</keyword>
<keyword id="KW-0963">Cytoplasm</keyword>
<keyword id="KW-0597">Phosphoprotein</keyword>
<keyword id="KW-1185">Reference proteome</keyword>
<keyword id="KW-0346">Stress response</keyword>
<evidence type="ECO:0000255" key="1"/>
<evidence type="ECO:0000256" key="2">
    <source>
        <dbReference type="SAM" id="MobiDB-lite"/>
    </source>
</evidence>
<evidence type="ECO:0000269" key="3">
    <source>
    </source>
</evidence>
<evidence type="ECO:0000269" key="4">
    <source>
    </source>
</evidence>
<evidence type="ECO:0000269" key="5">
    <source>
    </source>
</evidence>
<evidence type="ECO:0000269" key="6">
    <source>
    </source>
</evidence>
<evidence type="ECO:0000269" key="7">
    <source>
    </source>
</evidence>
<evidence type="ECO:0000269" key="8">
    <source>
    </source>
</evidence>
<evidence type="ECO:0000269" key="9">
    <source>
    </source>
</evidence>
<evidence type="ECO:0000305" key="10"/>
<evidence type="ECO:0000305" key="11">
    <source>
    </source>
</evidence>
<evidence type="ECO:0007829" key="12">
    <source>
        <dbReference type="PDB" id="6LFA"/>
    </source>
</evidence>
<name>WAG31_MYCTU</name>
<feature type="chain" id="PRO_0000064492" description="Cell wall synthesis protein Wag31">
    <location>
        <begin position="1"/>
        <end position="260"/>
    </location>
</feature>
<feature type="region of interest" description="Disordered" evidence="2">
    <location>
        <begin position="233"/>
        <end position="260"/>
    </location>
</feature>
<feature type="coiled-coil region" evidence="1">
    <location>
        <begin position="31"/>
        <end position="64"/>
    </location>
</feature>
<feature type="coiled-coil region" evidence="1">
    <location>
        <begin position="161"/>
        <end position="196"/>
    </location>
</feature>
<feature type="modified residue" description="Phosphothreonine" evidence="3">
    <location>
        <position position="73"/>
    </location>
</feature>
<feature type="mutagenesis site" description="No interaction with PbpB (PBP3, FtsI). Slower growth, increased sensitivity to H(2)O(2) and to antibiotics ofloxacin and isoniazid, increased degradation of PbpB. Decreased survival in human macrophage line THP-1." evidence="5">
    <location>
        <begin position="46"/>
        <end position="48"/>
    </location>
</feature>
<feature type="mutagenesis site" description="Strong decrease in phosphorylation of Wag31." evidence="3 6">
    <original>T</original>
    <variation>A</variation>
    <variation>S</variation>
    <location>
        <position position="73"/>
    </location>
</feature>
<feature type="mutagenesis site" description="Increases homooligomerization." evidence="3 6">
    <original>T</original>
    <variation>E</variation>
    <location>
        <position position="73"/>
    </location>
</feature>
<feature type="helix" evidence="12">
    <location>
        <begin position="5"/>
        <end position="10"/>
    </location>
</feature>
<feature type="helix" evidence="12">
    <location>
        <begin position="25"/>
        <end position="59"/>
    </location>
</feature>
<organism>
    <name type="scientific">Mycobacterium tuberculosis (strain ATCC 25618 / H37Rv)</name>
    <dbReference type="NCBI Taxonomy" id="83332"/>
    <lineage>
        <taxon>Bacteria</taxon>
        <taxon>Bacillati</taxon>
        <taxon>Actinomycetota</taxon>
        <taxon>Actinomycetes</taxon>
        <taxon>Mycobacteriales</taxon>
        <taxon>Mycobacteriaceae</taxon>
        <taxon>Mycobacterium</taxon>
        <taxon>Mycobacterium tuberculosis complex</taxon>
    </lineage>
</organism>
<dbReference type="EMBL" id="X77129">
    <property type="protein sequence ID" value="CAA54385.1"/>
    <property type="molecule type" value="Genomic_DNA"/>
</dbReference>
<dbReference type="EMBL" id="AL123456">
    <property type="protein sequence ID" value="CCP44921.1"/>
    <property type="molecule type" value="Genomic_DNA"/>
</dbReference>
<dbReference type="PIR" id="E70578">
    <property type="entry name" value="E70578"/>
</dbReference>
<dbReference type="RefSeq" id="NP_216661.1">
    <property type="nucleotide sequence ID" value="NC_000962.3"/>
</dbReference>
<dbReference type="RefSeq" id="WP_003411131.1">
    <property type="nucleotide sequence ID" value="NZ_NVQJ01000044.1"/>
</dbReference>
<dbReference type="PDB" id="6LFA">
    <property type="method" value="X-ray"/>
    <property type="resolution" value="2.30 A"/>
    <property type="chains" value="A/B=2-60"/>
</dbReference>
<dbReference type="PDBsum" id="6LFA"/>
<dbReference type="SASBDB" id="P9WMU1"/>
<dbReference type="SMR" id="P9WMU1"/>
<dbReference type="IntAct" id="P9WMU1">
    <property type="interactions" value="3"/>
</dbReference>
<dbReference type="STRING" id="83332.Rv2145c"/>
<dbReference type="iPTMnet" id="P9WMU1"/>
<dbReference type="PaxDb" id="83332-Rv2145c"/>
<dbReference type="DNASU" id="888224"/>
<dbReference type="GeneID" id="888224"/>
<dbReference type="KEGG" id="mtu:Rv2145c"/>
<dbReference type="KEGG" id="mtv:RVBD_2145c"/>
<dbReference type="TubercuList" id="Rv2145c"/>
<dbReference type="eggNOG" id="COG3599">
    <property type="taxonomic scope" value="Bacteria"/>
</dbReference>
<dbReference type="InParanoid" id="P9WMU1"/>
<dbReference type="OrthoDB" id="9815492at2"/>
<dbReference type="PhylomeDB" id="P9WMU1"/>
<dbReference type="PHI-base" id="PHI:11332"/>
<dbReference type="Proteomes" id="UP000001584">
    <property type="component" value="Chromosome"/>
</dbReference>
<dbReference type="GO" id="GO:0060187">
    <property type="term" value="C:cell pole"/>
    <property type="evidence" value="ECO:0000314"/>
    <property type="project" value="MTBBASE"/>
</dbReference>
<dbReference type="GO" id="GO:0005737">
    <property type="term" value="C:cytoplasm"/>
    <property type="evidence" value="ECO:0007669"/>
    <property type="project" value="UniProtKB-SubCell"/>
</dbReference>
<dbReference type="GO" id="GO:0009274">
    <property type="term" value="C:peptidoglycan-based cell wall"/>
    <property type="evidence" value="ECO:0007005"/>
    <property type="project" value="MTBBASE"/>
</dbReference>
<dbReference type="GO" id="GO:0005886">
    <property type="term" value="C:plasma membrane"/>
    <property type="evidence" value="ECO:0007005"/>
    <property type="project" value="MTBBASE"/>
</dbReference>
<dbReference type="GO" id="GO:0051301">
    <property type="term" value="P:cell division"/>
    <property type="evidence" value="ECO:0007669"/>
    <property type="project" value="UniProtKB-KW"/>
</dbReference>
<dbReference type="GO" id="GO:0009273">
    <property type="term" value="P:peptidoglycan-based cell wall biogenesis"/>
    <property type="evidence" value="ECO:0000315"/>
    <property type="project" value="MTBBASE"/>
</dbReference>
<dbReference type="GO" id="GO:0050821">
    <property type="term" value="P:protein stabilization"/>
    <property type="evidence" value="ECO:0000314"/>
    <property type="project" value="MTBBASE"/>
</dbReference>
<dbReference type="GO" id="GO:0008360">
    <property type="term" value="P:regulation of cell shape"/>
    <property type="evidence" value="ECO:0000315"/>
    <property type="project" value="UniProtKB"/>
</dbReference>
<dbReference type="GO" id="GO:0040009">
    <property type="term" value="P:regulation of growth rate"/>
    <property type="evidence" value="ECO:0000315"/>
    <property type="project" value="UniProtKB"/>
</dbReference>
<dbReference type="Gene3D" id="6.10.250.660">
    <property type="match status" value="1"/>
</dbReference>
<dbReference type="Gene3D" id="1.20.5.620">
    <property type="entry name" value="F1F0 ATP synthase subunit B, membrane domain"/>
    <property type="match status" value="1"/>
</dbReference>
<dbReference type="InterPro" id="IPR019933">
    <property type="entry name" value="DivIVA_domain"/>
</dbReference>
<dbReference type="InterPro" id="IPR007793">
    <property type="entry name" value="DivIVA_fam"/>
</dbReference>
<dbReference type="NCBIfam" id="TIGR03544">
    <property type="entry name" value="DivI1A_domain"/>
    <property type="match status" value="1"/>
</dbReference>
<dbReference type="PANTHER" id="PTHR35794">
    <property type="entry name" value="CELL DIVISION PROTEIN DIVIVA"/>
    <property type="match status" value="1"/>
</dbReference>
<dbReference type="PANTHER" id="PTHR35794:SF2">
    <property type="entry name" value="CELL DIVISION PROTEIN DIVIVA"/>
    <property type="match status" value="1"/>
</dbReference>
<dbReference type="Pfam" id="PF05103">
    <property type="entry name" value="DivIVA"/>
    <property type="match status" value="1"/>
</dbReference>
<dbReference type="SUPFAM" id="SSF58113">
    <property type="entry name" value="Apolipoprotein A-I"/>
    <property type="match status" value="1"/>
</dbReference>
<gene>
    <name type="primary">wag31</name>
    <name type="synonym">ag84</name>
    <name type="ordered locus">Rv2145c</name>
    <name type="ORF">MTCY270.23</name>
</gene>
<proteinExistence type="evidence at protein level"/>
<protein>
    <recommendedName>
        <fullName>Cell wall synthesis protein Wag31</fullName>
    </recommendedName>
    <alternativeName>
        <fullName>Antigen 84</fullName>
    </alternativeName>
</protein>
<accession>P9WMU1</accession>
<accession>L0TBN0</accession>
<accession>P0A5N2</accession>
<accession>P46816</accession>
<sequence length="260" mass="28277">MPLTPADVHNVAFSKPPIGKRGYNEDEVDAFLDLVENELTRLIEENSDLRQRINELDQELAAGGGAGVTPQATQAIPAYEPEPGKPAPAAVSAGMNEEQALKAARVLSLAQDTADRLTNTAKAESDKMLADARANAEQILGEARHTADATVAEARQRADAMLADAQSRSEAQLRQAQEKADALQADAERKHSEIMGTINQQRAVLEGRLEQLRTFEREYRTRLKTYLESQLEELGQRGSAAPVDSNADAGGFDQFNRGKN</sequence>